<keyword id="KW-0963">Cytoplasm</keyword>
<keyword id="KW-0521">NADP</keyword>
<keyword id="KW-0560">Oxidoreductase</keyword>
<keyword id="KW-0671">Queuosine biosynthesis</keyword>
<keyword id="KW-1185">Reference proteome</keyword>
<accession>Q46920</accession>
<accession>Q2MA40</accession>
<protein>
    <recommendedName>
        <fullName>NADPH-dependent 7-cyano-7-deazaguanine reductase</fullName>
        <ecNumber>1.7.1.13</ecNumber>
    </recommendedName>
    <alternativeName>
        <fullName>7-cyano-7-carbaguanine reductase</fullName>
    </alternativeName>
    <alternativeName>
        <fullName>NADPH-dependent nitrile oxidoreductase</fullName>
    </alternativeName>
    <alternativeName>
        <fullName>PreQ(0) reductase</fullName>
    </alternativeName>
</protein>
<name>QUEF_ECOLI</name>
<reference key="1">
    <citation type="journal article" date="1997" name="Science">
        <title>The complete genome sequence of Escherichia coli K-12.</title>
        <authorList>
            <person name="Blattner F.R."/>
            <person name="Plunkett G. III"/>
            <person name="Bloch C.A."/>
            <person name="Perna N.T."/>
            <person name="Burland V."/>
            <person name="Riley M."/>
            <person name="Collado-Vides J."/>
            <person name="Glasner J.D."/>
            <person name="Rode C.K."/>
            <person name="Mayhew G.F."/>
            <person name="Gregor J."/>
            <person name="Davis N.W."/>
            <person name="Kirkpatrick H.A."/>
            <person name="Goeden M.A."/>
            <person name="Rose D.J."/>
            <person name="Mau B."/>
            <person name="Shao Y."/>
        </authorList>
    </citation>
    <scope>NUCLEOTIDE SEQUENCE [LARGE SCALE GENOMIC DNA]</scope>
    <source>
        <strain>K12 / MG1655 / ATCC 47076</strain>
    </source>
</reference>
<reference key="2">
    <citation type="journal article" date="2006" name="Mol. Syst. Biol.">
        <title>Highly accurate genome sequences of Escherichia coli K-12 strains MG1655 and W3110.</title>
        <authorList>
            <person name="Hayashi K."/>
            <person name="Morooka N."/>
            <person name="Yamamoto Y."/>
            <person name="Fujita K."/>
            <person name="Isono K."/>
            <person name="Choi S."/>
            <person name="Ohtsubo E."/>
            <person name="Baba T."/>
            <person name="Wanner B.L."/>
            <person name="Mori H."/>
            <person name="Horiuchi T."/>
        </authorList>
    </citation>
    <scope>NUCLEOTIDE SEQUENCE [LARGE SCALE GENOMIC DNA]</scope>
    <source>
        <strain>K12 / W3110 / ATCC 27325 / DSM 5911</strain>
    </source>
</reference>
<reference key="3">
    <citation type="journal article" date="2005" name="Proc. Natl. Acad. Sci. U.S.A.">
        <title>From cyclohydrolase to oxidoreductase: discovery of nitrile reductase activity in a common fold.</title>
        <authorList>
            <person name="Van Lanen S.G."/>
            <person name="Reader J.S."/>
            <person name="Swairjo M.A."/>
            <person name="de Crecy-Lagard V."/>
            <person name="Lee B."/>
            <person name="Iwata-Reuyl D."/>
        </authorList>
    </citation>
    <scope>FUNCTION</scope>
    <scope>KINETIC PARAMETERS</scope>
    <scope>SUBUNIT</scope>
</reference>
<reference key="4">
    <citation type="journal article" date="2013" name="Chemistry">
        <title>Targeting the substrate binding site of E. coli nitrile reductase QueF by modeling, substrate and enzyme engineering.</title>
        <authorList>
            <person name="Wilding B."/>
            <person name="Winkler M."/>
            <person name="Petschacher B."/>
            <person name="Kratzer R."/>
            <person name="Egger S."/>
            <person name="Steinkellner G."/>
            <person name="Lyskowski A."/>
            <person name="Nidetzky B."/>
            <person name="Gruber K."/>
            <person name="Klempier N."/>
        </authorList>
    </citation>
    <scope>FUNCTION</scope>
    <scope>CATALYTIC ACTIVITY</scope>
    <scope>SUBSTRATE SPECIFICITY</scope>
    <scope>KINETIC PARAMETERS</scope>
    <scope>3D-STRUCTURE MODELING</scope>
    <scope>ACTIVE SITES</scope>
    <scope>MUTAGENESIS OF GLU-89; SER-90; CYS-190; ASP-197; PHE-228; HIS-229 AND GLU-230</scope>
    <source>
        <strain>K12</strain>
    </source>
</reference>
<reference key="5">
    <citation type="journal article" date="2013" name="Enzyme Microb. Technol.">
        <title>Expression and characterization of the nitrile reductase queF from E. coli.</title>
        <authorList>
            <person name="Moeller K."/>
            <person name="Nguyen G.S."/>
            <person name="Hollmann F."/>
            <person name="Hanefeld U."/>
        </authorList>
    </citation>
    <scope>FUNCTION</scope>
    <scope>CATALYTIC ACTIVITY</scope>
    <scope>SUBSTRATE SPECIFICITY</scope>
    <scope>BIOPHYSICOCHEMICAL PROPERTIES</scope>
    <scope>3D-STRUCTURE MODELING</scope>
    <source>
        <strain>K12</strain>
    </source>
</reference>
<dbReference type="EC" id="1.7.1.13"/>
<dbReference type="EMBL" id="U29581">
    <property type="protein sequence ID" value="AAB40444.1"/>
    <property type="molecule type" value="Genomic_DNA"/>
</dbReference>
<dbReference type="EMBL" id="U00096">
    <property type="protein sequence ID" value="AAC75836.1"/>
    <property type="molecule type" value="Genomic_DNA"/>
</dbReference>
<dbReference type="EMBL" id="AP009048">
    <property type="protein sequence ID" value="BAE76866.1"/>
    <property type="molecule type" value="Genomic_DNA"/>
</dbReference>
<dbReference type="PIR" id="F65061">
    <property type="entry name" value="F65061"/>
</dbReference>
<dbReference type="RefSeq" id="NP_417274.1">
    <property type="nucleotide sequence ID" value="NC_000913.3"/>
</dbReference>
<dbReference type="RefSeq" id="WP_000100421.1">
    <property type="nucleotide sequence ID" value="NZ_LN832404.1"/>
</dbReference>
<dbReference type="SMR" id="Q46920"/>
<dbReference type="BioGRID" id="4262149">
    <property type="interactions" value="60"/>
</dbReference>
<dbReference type="DIP" id="DIP-12848N"/>
<dbReference type="FunCoup" id="Q46920">
    <property type="interactions" value="128"/>
</dbReference>
<dbReference type="IntAct" id="Q46920">
    <property type="interactions" value="6"/>
</dbReference>
<dbReference type="STRING" id="511145.b2794"/>
<dbReference type="jPOST" id="Q46920"/>
<dbReference type="PaxDb" id="511145-b2794"/>
<dbReference type="EnsemblBacteria" id="AAC75836">
    <property type="protein sequence ID" value="AAC75836"/>
    <property type="gene ID" value="b2794"/>
</dbReference>
<dbReference type="GeneID" id="947270"/>
<dbReference type="KEGG" id="ecj:JW2765"/>
<dbReference type="KEGG" id="eco:b2794"/>
<dbReference type="KEGG" id="ecoc:C3026_15365"/>
<dbReference type="PATRIC" id="fig|1411691.4.peg.3939"/>
<dbReference type="EchoBASE" id="EB2965"/>
<dbReference type="eggNOG" id="COG0780">
    <property type="taxonomic scope" value="Bacteria"/>
</dbReference>
<dbReference type="eggNOG" id="COG2904">
    <property type="taxonomic scope" value="Bacteria"/>
</dbReference>
<dbReference type="HOGENOM" id="CLU_054738_0_0_6"/>
<dbReference type="InParanoid" id="Q46920"/>
<dbReference type="OMA" id="QCVERIY"/>
<dbReference type="OrthoDB" id="9789995at2"/>
<dbReference type="PhylomeDB" id="Q46920"/>
<dbReference type="BioCyc" id="EcoCyc:G7452-MONOMER"/>
<dbReference type="BioCyc" id="MetaCyc:G7452-MONOMER"/>
<dbReference type="BRENDA" id="1.7.1.13">
    <property type="organism ID" value="2026"/>
</dbReference>
<dbReference type="UniPathway" id="UPA00392"/>
<dbReference type="PRO" id="PR:Q46920"/>
<dbReference type="Proteomes" id="UP000000625">
    <property type="component" value="Chromosome"/>
</dbReference>
<dbReference type="GO" id="GO:0005829">
    <property type="term" value="C:cytosol"/>
    <property type="evidence" value="ECO:0000314"/>
    <property type="project" value="EcoCyc"/>
</dbReference>
<dbReference type="GO" id="GO:0033739">
    <property type="term" value="F:preQ1 synthase activity"/>
    <property type="evidence" value="ECO:0000314"/>
    <property type="project" value="EcoCyc"/>
</dbReference>
<dbReference type="GO" id="GO:0008616">
    <property type="term" value="P:queuosine biosynthetic process"/>
    <property type="evidence" value="ECO:0000315"/>
    <property type="project" value="EcoCyc"/>
</dbReference>
<dbReference type="GO" id="GO:0006400">
    <property type="term" value="P:tRNA modification"/>
    <property type="evidence" value="ECO:0007669"/>
    <property type="project" value="UniProtKB-UniRule"/>
</dbReference>
<dbReference type="FunFam" id="3.30.1130.10:FF:000004">
    <property type="entry name" value="NADPH-dependent 7-cyano-7-deazaguanine reductase"/>
    <property type="match status" value="1"/>
</dbReference>
<dbReference type="FunFam" id="3.30.1130.10:FF:000006">
    <property type="entry name" value="NADPH-dependent 7-cyano-7-deazaguanine reductase"/>
    <property type="match status" value="1"/>
</dbReference>
<dbReference type="Gene3D" id="3.30.1130.10">
    <property type="match status" value="2"/>
</dbReference>
<dbReference type="HAMAP" id="MF_00817">
    <property type="entry name" value="QueF_type2"/>
    <property type="match status" value="1"/>
</dbReference>
<dbReference type="InterPro" id="IPR043133">
    <property type="entry name" value="GTP-CH-I_C/QueF"/>
</dbReference>
<dbReference type="InterPro" id="IPR050084">
    <property type="entry name" value="NADPH_dep_7-cyano-7-deazaG_red"/>
</dbReference>
<dbReference type="InterPro" id="IPR029500">
    <property type="entry name" value="QueF"/>
</dbReference>
<dbReference type="InterPro" id="IPR029139">
    <property type="entry name" value="QueF_N"/>
</dbReference>
<dbReference type="InterPro" id="IPR016428">
    <property type="entry name" value="QueF_type2"/>
</dbReference>
<dbReference type="NCBIfam" id="TIGR03138">
    <property type="entry name" value="QueF"/>
    <property type="match status" value="1"/>
</dbReference>
<dbReference type="PANTHER" id="PTHR34354">
    <property type="entry name" value="NADPH-DEPENDENT 7-CYANO-7-DEAZAGUANINE REDUCTASE"/>
    <property type="match status" value="1"/>
</dbReference>
<dbReference type="PANTHER" id="PTHR34354:SF1">
    <property type="entry name" value="NADPH-DEPENDENT 7-CYANO-7-DEAZAGUANINE REDUCTASE"/>
    <property type="match status" value="1"/>
</dbReference>
<dbReference type="Pfam" id="PF14489">
    <property type="entry name" value="QueF"/>
    <property type="match status" value="1"/>
</dbReference>
<dbReference type="Pfam" id="PF14819">
    <property type="entry name" value="QueF_N"/>
    <property type="match status" value="1"/>
</dbReference>
<dbReference type="PIRSF" id="PIRSF004750">
    <property type="entry name" value="Nitrile_oxidored_YqcD_prd"/>
    <property type="match status" value="1"/>
</dbReference>
<dbReference type="SUPFAM" id="SSF55620">
    <property type="entry name" value="Tetrahydrobiopterin biosynthesis enzymes-like"/>
    <property type="match status" value="1"/>
</dbReference>
<proteinExistence type="evidence at protein level"/>
<evidence type="ECO:0000250" key="1"/>
<evidence type="ECO:0000269" key="2">
    <source>
    </source>
</evidence>
<evidence type="ECO:0000269" key="3">
    <source>
    </source>
</evidence>
<evidence type="ECO:0000269" key="4">
    <source>
    </source>
</evidence>
<evidence type="ECO:0000305" key="5"/>
<evidence type="ECO:0000305" key="6">
    <source>
    </source>
</evidence>
<organism>
    <name type="scientific">Escherichia coli (strain K12)</name>
    <dbReference type="NCBI Taxonomy" id="83333"/>
    <lineage>
        <taxon>Bacteria</taxon>
        <taxon>Pseudomonadati</taxon>
        <taxon>Pseudomonadota</taxon>
        <taxon>Gammaproteobacteria</taxon>
        <taxon>Enterobacterales</taxon>
        <taxon>Enterobacteriaceae</taxon>
        <taxon>Escherichia</taxon>
    </lineage>
</organism>
<gene>
    <name type="primary">queF</name>
    <name type="synonym">yqcD</name>
    <name type="ordered locus">b2794</name>
    <name type="ordered locus">JW2765</name>
</gene>
<comment type="function">
    <text evidence="2 3 4">Catalyzes the NADPH-dependent reduction of 7-cyano-7-deazaguanine (preQ0) to 7-aminomethyl-7-deazaguanine (preQ1), a late step in the queuosine pathway. Is highly specific for its natural substrate preQ0, since it cannot use various aliphatic, aromatic, benzylic and heterocyclic nitriles, such as acetonitrile, benzonitrile, benzylcyanide and 2-cyanopyrrole, although it can reduce the substrate analog 5-cyanopyrrolo[2,3-d]pyrimidin-4-one with lesser efficiency.</text>
</comment>
<comment type="catalytic activity">
    <reaction evidence="3 4">
        <text>7-aminomethyl-7-carbaguanine + 2 NADP(+) = 7-cyano-7-deazaguanine + 2 NADPH + 3 H(+)</text>
        <dbReference type="Rhea" id="RHEA:13409"/>
        <dbReference type="ChEBI" id="CHEBI:15378"/>
        <dbReference type="ChEBI" id="CHEBI:45075"/>
        <dbReference type="ChEBI" id="CHEBI:57783"/>
        <dbReference type="ChEBI" id="CHEBI:58349"/>
        <dbReference type="ChEBI" id="CHEBI:58703"/>
        <dbReference type="EC" id="1.7.1.13"/>
    </reaction>
</comment>
<comment type="biophysicochemical properties">
    <kinetics>
        <KM evidence="2 3 4">36 uM for NADPH</KM>
        <KM evidence="2 3 4">6 uM for NADPH</KM>
        <KM evidence="2 3 4">6.1 uM for 7-cyano-7-deazaguanine</KM>
        <KM evidence="2 3 4">176 uM for 5-cyanopyrrolo[2,3-d]pyrimidin-4-one</KM>
        <text evidence="3 4">KM for preQ0 appears to be inferior to 1.5 uM, and kcat is 0.1268 sec(-1) (PubMed:23410922). kcat is 6.5 min(-1) with preQ0 as substrate and 3.6 min(-1) with 5-cyanopyrrolo[2,3-d]pyrimidin-4-one as substrate (PubMed:23595998).</text>
    </kinetics>
    <phDependence>
        <text evidence="3">Optimum pH is 7. Retains less than 20% of activity at pH 9 (PubMed:23410922).</text>
    </phDependence>
    <temperatureDependence>
        <text evidence="3">Optimum temperature is 37 degrees Celsius. Displays a half life of 28.2 hours and 12.8 hours at 37 and 40 degrees Celsius, respectively, but at 50 degrees Celsius the half life time drops to 6 minutes (PubMed:23410922).</text>
    </temperatureDependence>
</comment>
<comment type="pathway">
    <text>tRNA modification; tRNA-queuosine biosynthesis.</text>
</comment>
<comment type="subunit">
    <text evidence="2">Homodimer.</text>
</comment>
<comment type="subcellular location">
    <subcellularLocation>
        <location evidence="5">Cytoplasm</location>
    </subcellularLocation>
</comment>
<comment type="similarity">
    <text evidence="5">Belongs to the GTP cyclohydrolase I family. QueF type 2 subfamily.</text>
</comment>
<feature type="chain" id="PRO_0000163031" description="NADPH-dependent 7-cyano-7-deazaguanine reductase">
    <location>
        <begin position="1"/>
        <end position="282"/>
    </location>
</feature>
<feature type="active site" description="Thioimide intermediate" evidence="6">
    <location>
        <position position="190"/>
    </location>
</feature>
<feature type="active site" description="Proton donor" evidence="6">
    <location>
        <position position="197"/>
    </location>
</feature>
<feature type="binding site" evidence="5">
    <location>
        <begin position="88"/>
        <end position="90"/>
    </location>
    <ligand>
        <name>substrate</name>
    </ligand>
</feature>
<feature type="binding site" evidence="1">
    <location>
        <begin position="90"/>
        <end position="91"/>
    </location>
    <ligand>
        <name>NADPH</name>
        <dbReference type="ChEBI" id="CHEBI:57783"/>
    </ligand>
</feature>
<feature type="binding site" evidence="5">
    <location>
        <begin position="229"/>
        <end position="230"/>
    </location>
    <ligand>
        <name>substrate</name>
    </ligand>
</feature>
<feature type="binding site" evidence="1">
    <location>
        <begin position="258"/>
        <end position="259"/>
    </location>
    <ligand>
        <name>NADPH</name>
        <dbReference type="ChEBI" id="CHEBI:57783"/>
    </ligand>
</feature>
<feature type="mutagenesis site" description="Drastic decrease in activity." evidence="4">
    <original>E</original>
    <variation>A</variation>
    <variation>L</variation>
    <location>
        <position position="89"/>
    </location>
</feature>
<feature type="mutagenesis site" description="9-fold decrease in specific activity." evidence="4">
    <original>S</original>
    <variation>A</variation>
    <location>
        <position position="90"/>
    </location>
</feature>
<feature type="mutagenesis site" description="Loss of catalytic activity." evidence="4">
    <original>C</original>
    <variation>A</variation>
    <location>
        <position position="190"/>
    </location>
</feature>
<feature type="mutagenesis site" description="Loss of catalytic activity." evidence="4">
    <original>D</original>
    <variation>N</variation>
    <location>
        <position position="197"/>
    </location>
</feature>
<feature type="mutagenesis site" description="11-fold decrease in specific activity." evidence="4">
    <original>F</original>
    <variation>W</variation>
    <location>
        <position position="228"/>
    </location>
</feature>
<feature type="mutagenesis site" description="6.5-fold decrease in specific activity." evidence="4">
    <original>H</original>
    <variation>A</variation>
    <location>
        <position position="229"/>
    </location>
</feature>
<feature type="mutagenesis site" description="26-fold decrease in specific activity." evidence="4">
    <original>E</original>
    <variation>Q</variation>
    <location>
        <position position="230"/>
    </location>
</feature>
<sequence>MSSYANHQALAGLTLGKSTDYRDTYDASLLQGVPRSLNRDPLGLKADNLPFHGTDIWTLYELSWLNAKGLPQVAVGHVELDYTSVNLIESKSFKLYLNSFNQTRFNNWDEVRQTLERDLSTCAQGKISVALYRLDELEGQPIGHFNGTCIDDQDITIDNYEFTTDYLENATCGEKVVEETLVSHLLKSNCLITHQPDWGSLQIQYRGRQIDREKLLRYLVSFRHHNEFHEQCVERIFNDLLRFCQPEKLSVYARYTRRGGLDINPWRSNSDFVPSTTRLVRQ</sequence>